<reference key="1">
    <citation type="submission" date="2004-11" db="EMBL/GenBank/DDBJ databases">
        <authorList>
            <consortium name="The German cDNA consortium"/>
        </authorList>
    </citation>
    <scope>NUCLEOTIDE SEQUENCE [LARGE SCALE MRNA]</scope>
    <source>
        <tissue>Brain cortex</tissue>
    </source>
</reference>
<protein>
    <recommendedName>
        <fullName evidence="4">Large ribosomal subunit protein eL15</fullName>
    </recommendedName>
    <alternativeName>
        <fullName>60S ribosomal protein L15</fullName>
    </alternativeName>
</protein>
<name>RL15_PONAB</name>
<feature type="initiator methionine" description="Removed" evidence="1">
    <location>
        <position position="1"/>
    </location>
</feature>
<feature type="chain" id="PRO_0000127530" description="Large ribosomal subunit protein eL15">
    <location>
        <begin position="2"/>
        <end position="204"/>
    </location>
</feature>
<feature type="region of interest" description="Disordered" evidence="3">
    <location>
        <begin position="165"/>
        <end position="186"/>
    </location>
</feature>
<feature type="compositionally biased region" description="Basic residues" evidence="3">
    <location>
        <begin position="169"/>
        <end position="182"/>
    </location>
</feature>
<feature type="modified residue" description="Phosphoserine" evidence="2">
    <location>
        <position position="34"/>
    </location>
</feature>
<feature type="modified residue" description="Phosphoserine" evidence="1">
    <location>
        <position position="97"/>
    </location>
</feature>
<feature type="modified residue" description="Phosphoserine" evidence="1">
    <location>
        <position position="100"/>
    </location>
</feature>
<feature type="lipid moiety-binding region" description="N-myristoyl glycine" evidence="1">
    <location>
        <position position="2"/>
    </location>
</feature>
<feature type="cross-link" description="Glycyl lysine isopeptide (Lys-Gly) (interchain with G-Cter in SUMO2)" evidence="1">
    <location>
        <position position="83"/>
    </location>
</feature>
<feature type="sequence conflict" description="In Ref. 1; CAH91644." evidence="4" ref="1">
    <original>I</original>
    <variation>V</variation>
    <location>
        <position position="7"/>
    </location>
</feature>
<organism>
    <name type="scientific">Pongo abelii</name>
    <name type="common">Sumatran orangutan</name>
    <name type="synonym">Pongo pygmaeus abelii</name>
    <dbReference type="NCBI Taxonomy" id="9601"/>
    <lineage>
        <taxon>Eukaryota</taxon>
        <taxon>Metazoa</taxon>
        <taxon>Chordata</taxon>
        <taxon>Craniata</taxon>
        <taxon>Vertebrata</taxon>
        <taxon>Euteleostomi</taxon>
        <taxon>Mammalia</taxon>
        <taxon>Eutheria</taxon>
        <taxon>Euarchontoglires</taxon>
        <taxon>Primates</taxon>
        <taxon>Haplorrhini</taxon>
        <taxon>Catarrhini</taxon>
        <taxon>Hominidae</taxon>
        <taxon>Pongo</taxon>
    </lineage>
</organism>
<gene>
    <name type="primary">RPL15</name>
</gene>
<accession>Q5NVE0</accession>
<accession>Q5R9B6</accession>
<comment type="function">
    <text evidence="1">Component of the large ribosomal subunit. The ribosome is a large ribonucleoprotein complex responsible for the synthesis of proteins in the cell.</text>
</comment>
<comment type="subunit">
    <text evidence="1">Component of the large ribosomal subunit. Interacts with IFIT1 (via TPR repeats 1-4).</text>
</comment>
<comment type="subcellular location">
    <subcellularLocation>
        <location evidence="1">Cytoplasm</location>
    </subcellularLocation>
</comment>
<comment type="similarity">
    <text evidence="4">Belongs to the eukaryotic ribosomal protein eL15 family.</text>
</comment>
<evidence type="ECO:0000250" key="1">
    <source>
        <dbReference type="UniProtKB" id="P61313"/>
    </source>
</evidence>
<evidence type="ECO:0000250" key="2">
    <source>
        <dbReference type="UniProtKB" id="P61314"/>
    </source>
</evidence>
<evidence type="ECO:0000256" key="3">
    <source>
        <dbReference type="SAM" id="MobiDB-lite"/>
    </source>
</evidence>
<evidence type="ECO:0000305" key="4"/>
<sequence>MGAYKYIQELWRKKQSDVMRFLLRVRCWQYRQLSALHRAPRPTRPDKARRLGYKAKQGYVIYRIRVRRGGRKRPVPKGATYGKPVHHGVNQLKFARSLQSVAEERAGRHCGALRVLNSYWVGEDSTYKFFEVILIDPFHKAIRRNPDTQWITKPVHKHREMRGLTSAGRKSRGLGKGHKFHHTIGGSRRAAWRRRNTLQLHRYR</sequence>
<proteinExistence type="evidence at transcript level"/>
<keyword id="KW-0963">Cytoplasm</keyword>
<keyword id="KW-1017">Isopeptide bond</keyword>
<keyword id="KW-0449">Lipoprotein</keyword>
<keyword id="KW-0519">Myristate</keyword>
<keyword id="KW-0597">Phosphoprotein</keyword>
<keyword id="KW-1185">Reference proteome</keyword>
<keyword id="KW-0687">Ribonucleoprotein</keyword>
<keyword id="KW-0689">Ribosomal protein</keyword>
<keyword id="KW-0832">Ubl conjugation</keyword>
<dbReference type="EMBL" id="CR859473">
    <property type="protein sequence ID" value="CAH91644.1"/>
    <property type="molecule type" value="mRNA"/>
</dbReference>
<dbReference type="EMBL" id="CR926097">
    <property type="protein sequence ID" value="CAI29723.1"/>
    <property type="molecule type" value="mRNA"/>
</dbReference>
<dbReference type="RefSeq" id="NP_001127692.1">
    <property type="nucleotide sequence ID" value="NM_001134220.1"/>
</dbReference>
<dbReference type="RefSeq" id="XP_009237547.1">
    <property type="nucleotide sequence ID" value="XM_009239272.4"/>
</dbReference>
<dbReference type="SMR" id="Q5NVE0"/>
<dbReference type="FunCoup" id="Q5NVE0">
    <property type="interactions" value="3326"/>
</dbReference>
<dbReference type="STRING" id="9601.ENSPPYP00000015736"/>
<dbReference type="Ensembl" id="ENSPPYT00000016357.2">
    <property type="protein sequence ID" value="ENSPPYP00000015736.1"/>
    <property type="gene ID" value="ENSPPYG00000014065.2"/>
</dbReference>
<dbReference type="GeneID" id="100174774"/>
<dbReference type="KEGG" id="pon:100174774"/>
<dbReference type="CTD" id="6138"/>
<dbReference type="eggNOG" id="KOG1678">
    <property type="taxonomic scope" value="Eukaryota"/>
</dbReference>
<dbReference type="GeneTree" id="ENSGT00910000144184"/>
<dbReference type="HOGENOM" id="CLU_080796_0_0_1"/>
<dbReference type="InParanoid" id="Q5NVE0"/>
<dbReference type="OMA" id="YIRDAWK"/>
<dbReference type="OrthoDB" id="10255148at2759"/>
<dbReference type="TreeFam" id="TF300050"/>
<dbReference type="Proteomes" id="UP000001595">
    <property type="component" value="Chromosome 3"/>
</dbReference>
<dbReference type="GO" id="GO:0022625">
    <property type="term" value="C:cytosolic large ribosomal subunit"/>
    <property type="evidence" value="ECO:0007669"/>
    <property type="project" value="TreeGrafter"/>
</dbReference>
<dbReference type="GO" id="GO:0003723">
    <property type="term" value="F:RNA binding"/>
    <property type="evidence" value="ECO:0007669"/>
    <property type="project" value="TreeGrafter"/>
</dbReference>
<dbReference type="GO" id="GO:0003735">
    <property type="term" value="F:structural constituent of ribosome"/>
    <property type="evidence" value="ECO:0007669"/>
    <property type="project" value="InterPro"/>
</dbReference>
<dbReference type="GO" id="GO:0002181">
    <property type="term" value="P:cytoplasmic translation"/>
    <property type="evidence" value="ECO:0007669"/>
    <property type="project" value="TreeGrafter"/>
</dbReference>
<dbReference type="FunFam" id="3.40.1120.10:FF:000001">
    <property type="entry name" value="Ribosomal protein L15"/>
    <property type="match status" value="1"/>
</dbReference>
<dbReference type="Gene3D" id="3.40.1120.10">
    <property type="entry name" value="Ribosomal protein l15e"/>
    <property type="match status" value="1"/>
</dbReference>
<dbReference type="InterPro" id="IPR024794">
    <property type="entry name" value="Rbsml_eL15_core_dom_sf"/>
</dbReference>
<dbReference type="InterPro" id="IPR000439">
    <property type="entry name" value="Ribosomal_eL15"/>
</dbReference>
<dbReference type="InterPro" id="IPR020925">
    <property type="entry name" value="Ribosomal_eL15_CS"/>
</dbReference>
<dbReference type="InterPro" id="IPR012678">
    <property type="entry name" value="Ribosomal_uL23/eL15/eS24_sf"/>
</dbReference>
<dbReference type="NCBIfam" id="NF003269">
    <property type="entry name" value="PRK04243.1"/>
    <property type="match status" value="1"/>
</dbReference>
<dbReference type="PANTHER" id="PTHR11847:SF4">
    <property type="entry name" value="LARGE RIBOSOMAL SUBUNIT PROTEIN EL15"/>
    <property type="match status" value="1"/>
</dbReference>
<dbReference type="PANTHER" id="PTHR11847">
    <property type="entry name" value="RIBOSOMAL PROTEIN L15"/>
    <property type="match status" value="1"/>
</dbReference>
<dbReference type="Pfam" id="PF00827">
    <property type="entry name" value="Ribosomal_L15e"/>
    <property type="match status" value="1"/>
</dbReference>
<dbReference type="SMART" id="SM01384">
    <property type="entry name" value="Ribosomal_L15e"/>
    <property type="match status" value="1"/>
</dbReference>
<dbReference type="SUPFAM" id="SSF54189">
    <property type="entry name" value="Ribosomal proteins S24e, L23 and L15e"/>
    <property type="match status" value="1"/>
</dbReference>
<dbReference type="PROSITE" id="PS01194">
    <property type="entry name" value="RIBOSOMAL_L15E"/>
    <property type="match status" value="1"/>
</dbReference>